<evidence type="ECO:0000255" key="1">
    <source>
        <dbReference type="HAMAP-Rule" id="MF_00161"/>
    </source>
</evidence>
<protein>
    <recommendedName>
        <fullName evidence="1">Lipoprotein signal peptidase</fullName>
        <ecNumber evidence="1">3.4.23.36</ecNumber>
    </recommendedName>
    <alternativeName>
        <fullName evidence="1">Prolipoprotein signal peptidase</fullName>
    </alternativeName>
    <alternativeName>
        <fullName evidence="1">Signal peptidase II</fullName>
        <shortName evidence="1">SPase II</shortName>
    </alternativeName>
</protein>
<sequence>MHKKYFIGTSILIAVFVVIFDQVTKYIIATTMKIGDSFEVIPHFLNITSHRNNGAAWGILSGKMTFFFIITIIILIALVYFFIKDAQYNLFMQVAISLLFAGALGNFIDRILTGEVVDFIDTNIFGYDFPIFNIADSSLTIGVILIIIALLKDTSNKKEKEVK</sequence>
<comment type="function">
    <text evidence="1">This protein specifically catalyzes the removal of signal peptides from prolipoproteins.</text>
</comment>
<comment type="catalytic activity">
    <reaction evidence="1">
        <text>Release of signal peptides from bacterial membrane prolipoproteins. Hydrolyzes -Xaa-Yaa-Zaa-|-(S,diacylglyceryl)Cys-, in which Xaa is hydrophobic (preferably Leu), and Yaa (Ala or Ser) and Zaa (Gly or Ala) have small, neutral side chains.</text>
        <dbReference type="EC" id="3.4.23.36"/>
    </reaction>
</comment>
<comment type="pathway">
    <text evidence="1">Protein modification; lipoprotein biosynthesis (signal peptide cleavage).</text>
</comment>
<comment type="subcellular location">
    <subcellularLocation>
        <location evidence="1">Cell membrane</location>
        <topology evidence="1">Multi-pass membrane protein</topology>
    </subcellularLocation>
</comment>
<comment type="similarity">
    <text evidence="1">Belongs to the peptidase A8 family.</text>
</comment>
<feature type="chain" id="PRO_0000178817" description="Lipoprotein signal peptidase">
    <location>
        <begin position="1"/>
        <end position="163"/>
    </location>
</feature>
<feature type="transmembrane region" description="Helical" evidence="1">
    <location>
        <begin position="11"/>
        <end position="31"/>
    </location>
</feature>
<feature type="transmembrane region" description="Helical" evidence="1">
    <location>
        <begin position="63"/>
        <end position="83"/>
    </location>
</feature>
<feature type="transmembrane region" description="Helical" evidence="1">
    <location>
        <begin position="88"/>
        <end position="108"/>
    </location>
</feature>
<feature type="transmembrane region" description="Helical" evidence="1">
    <location>
        <begin position="131"/>
        <end position="151"/>
    </location>
</feature>
<feature type="active site" evidence="1">
    <location>
        <position position="118"/>
    </location>
</feature>
<feature type="active site" evidence="1">
    <location>
        <position position="136"/>
    </location>
</feature>
<name>LSPA_STAAW</name>
<organism>
    <name type="scientific">Staphylococcus aureus (strain MW2)</name>
    <dbReference type="NCBI Taxonomy" id="196620"/>
    <lineage>
        <taxon>Bacteria</taxon>
        <taxon>Bacillati</taxon>
        <taxon>Bacillota</taxon>
        <taxon>Bacilli</taxon>
        <taxon>Bacillales</taxon>
        <taxon>Staphylococcaceae</taxon>
        <taxon>Staphylococcus</taxon>
    </lineage>
</organism>
<dbReference type="EC" id="3.4.23.36" evidence="1"/>
<dbReference type="EMBL" id="BA000033">
    <property type="protein sequence ID" value="BAB94944.1"/>
    <property type="molecule type" value="Genomic_DNA"/>
</dbReference>
<dbReference type="RefSeq" id="WP_000549207.1">
    <property type="nucleotide sequence ID" value="NC_003923.1"/>
</dbReference>
<dbReference type="SMR" id="P65268"/>
<dbReference type="KEGG" id="sam:MW1079"/>
<dbReference type="HOGENOM" id="CLU_083252_3_0_9"/>
<dbReference type="UniPathway" id="UPA00665"/>
<dbReference type="GO" id="GO:0005886">
    <property type="term" value="C:plasma membrane"/>
    <property type="evidence" value="ECO:0007669"/>
    <property type="project" value="UniProtKB-SubCell"/>
</dbReference>
<dbReference type="GO" id="GO:0004190">
    <property type="term" value="F:aspartic-type endopeptidase activity"/>
    <property type="evidence" value="ECO:0007669"/>
    <property type="project" value="UniProtKB-UniRule"/>
</dbReference>
<dbReference type="GO" id="GO:0006508">
    <property type="term" value="P:proteolysis"/>
    <property type="evidence" value="ECO:0007669"/>
    <property type="project" value="UniProtKB-KW"/>
</dbReference>
<dbReference type="HAMAP" id="MF_00161">
    <property type="entry name" value="LspA"/>
    <property type="match status" value="1"/>
</dbReference>
<dbReference type="InterPro" id="IPR001872">
    <property type="entry name" value="Peptidase_A8"/>
</dbReference>
<dbReference type="NCBIfam" id="TIGR00077">
    <property type="entry name" value="lspA"/>
    <property type="match status" value="1"/>
</dbReference>
<dbReference type="PANTHER" id="PTHR33695">
    <property type="entry name" value="LIPOPROTEIN SIGNAL PEPTIDASE"/>
    <property type="match status" value="1"/>
</dbReference>
<dbReference type="PANTHER" id="PTHR33695:SF1">
    <property type="entry name" value="LIPOPROTEIN SIGNAL PEPTIDASE"/>
    <property type="match status" value="1"/>
</dbReference>
<dbReference type="Pfam" id="PF01252">
    <property type="entry name" value="Peptidase_A8"/>
    <property type="match status" value="1"/>
</dbReference>
<dbReference type="PRINTS" id="PR00781">
    <property type="entry name" value="LIPOSIGPTASE"/>
</dbReference>
<dbReference type="PROSITE" id="PS00855">
    <property type="entry name" value="SPASE_II"/>
    <property type="match status" value="1"/>
</dbReference>
<proteinExistence type="inferred from homology"/>
<keyword id="KW-0064">Aspartyl protease</keyword>
<keyword id="KW-1003">Cell membrane</keyword>
<keyword id="KW-0378">Hydrolase</keyword>
<keyword id="KW-0472">Membrane</keyword>
<keyword id="KW-0645">Protease</keyword>
<keyword id="KW-0812">Transmembrane</keyword>
<keyword id="KW-1133">Transmembrane helix</keyword>
<accession>P65268</accession>
<accession>Q99US2</accession>
<reference key="1">
    <citation type="journal article" date="2002" name="Lancet">
        <title>Genome and virulence determinants of high virulence community-acquired MRSA.</title>
        <authorList>
            <person name="Baba T."/>
            <person name="Takeuchi F."/>
            <person name="Kuroda M."/>
            <person name="Yuzawa H."/>
            <person name="Aoki K."/>
            <person name="Oguchi A."/>
            <person name="Nagai Y."/>
            <person name="Iwama N."/>
            <person name="Asano K."/>
            <person name="Naimi T."/>
            <person name="Kuroda H."/>
            <person name="Cui L."/>
            <person name="Yamamoto K."/>
            <person name="Hiramatsu K."/>
        </authorList>
    </citation>
    <scope>NUCLEOTIDE SEQUENCE [LARGE SCALE GENOMIC DNA]</scope>
    <source>
        <strain>MW2</strain>
    </source>
</reference>
<gene>
    <name evidence="1" type="primary">lspA</name>
    <name type="synonym">lsp</name>
    <name type="ordered locus">MW1079</name>
</gene>